<keyword id="KW-0067">ATP-binding</keyword>
<keyword id="KW-0997">Cell inner membrane</keyword>
<keyword id="KW-1003">Cell membrane</keyword>
<keyword id="KW-0418">Kinase</keyword>
<keyword id="KW-0472">Membrane</keyword>
<keyword id="KW-0547">Nucleotide-binding</keyword>
<keyword id="KW-0597">Phosphoprotein</keyword>
<keyword id="KW-0808">Transferase</keyword>
<keyword id="KW-0812">Transmembrane</keyword>
<keyword id="KW-1133">Transmembrane helix</keyword>
<keyword id="KW-0902">Two-component regulatory system</keyword>
<name>REGB_CERSP</name>
<evidence type="ECO:0000250" key="1"/>
<evidence type="ECO:0000255" key="2">
    <source>
        <dbReference type="PROSITE-ProRule" id="PRU00107"/>
    </source>
</evidence>
<evidence type="ECO:0000269" key="3">
    <source>
    </source>
</evidence>
<organism>
    <name type="scientific">Cereibacter sphaeroides</name>
    <name type="common">Rhodobacter sphaeroides</name>
    <dbReference type="NCBI Taxonomy" id="1063"/>
    <lineage>
        <taxon>Bacteria</taxon>
        <taxon>Pseudomonadati</taxon>
        <taxon>Pseudomonadota</taxon>
        <taxon>Alphaproteobacteria</taxon>
        <taxon>Rhodobacterales</taxon>
        <taxon>Paracoccaceae</taxon>
        <taxon>Cereibacter</taxon>
    </lineage>
</organism>
<comment type="function">
    <text evidence="3">Member of the two-component regulatory system RegB/RegA. Involved in the positive regulation of photosynthesis gene expression in response to anaerobiosis. Also involved in positive regulation of the cbbI and cbbII Calvin cycle CO2 fixation operons, as well as in regulation of expression of genes involved in alternative CO2 fixation pathways. Phosphorylates RegA/PrrA.</text>
</comment>
<comment type="catalytic activity">
    <reaction>
        <text>ATP + protein L-histidine = ADP + protein N-phospho-L-histidine.</text>
        <dbReference type="EC" id="2.7.13.3"/>
    </reaction>
</comment>
<comment type="subcellular location">
    <subcellularLocation>
        <location evidence="1">Cell inner membrane</location>
        <topology evidence="1">Multi-pass membrane protein</topology>
    </subcellularLocation>
</comment>
<accession>P0C0Z0</accession>
<accession>Q53068</accession>
<accession>Q53070</accession>
<protein>
    <recommendedName>
        <fullName>Sensor histidine kinase RegB</fullName>
        <ecNumber>2.7.13.3</ecNumber>
    </recommendedName>
    <alternativeName>
        <fullName>Protein PrrB</fullName>
    </alternativeName>
</protein>
<proteinExistence type="inferred from homology"/>
<sequence>MILGPDGILNRDTRGDWWRLRTLILLRWMAVAGQLAAIVVTDWYLGVRLPMGLCFMAVGASVIANVIATFVFPQNRRLTEFQALMILLFDLTQLSFLLFLTGGLTNPFALLILAPVTISGVALDVRTTVILGAIAIGLLTFTAYFHLPLILADGSSLSVPRMFEFGFWLAIVIGILFLGLYSRRVAIEIRSMSDALLATQMALDREQKLTDLGGVVAAAAHELGTPLATIKLVSSELAEELSEQPALRDDADVIREQADRCRDILRSMGRAGKDDLQMRQGPLGEVLREAAEPHVGRGKRVEFDLYPSRGGDERQPVILRRPEVIHGVRNLIQNAVDFARSTVWIDGEWTGDRIAIRIVDDGEGYPPAIIGRIGDPFVRQRRAEESQSRRPGYEGMGLGLFIAKTLLERSGAELSFANAADPFLRSHERPERCGAIVEVIWPVDRLVVVRNAPLGENVLIQT</sequence>
<gene>
    <name type="primary">regB</name>
    <name type="synonym">prrB</name>
</gene>
<reference key="1">
    <citation type="journal article" date="1996" name="J. Bacteriol.">
        <title>A global signal transduction system regulates aerobic and anaerobic CO2 fixation in Rhodobacter sphaeroides.</title>
        <authorList>
            <person name="Qian Y."/>
            <person name="Tabita F.R."/>
        </authorList>
    </citation>
    <scope>NUCLEOTIDE SEQUENCE [GENOMIC DNA]</scope>
    <scope>FUNCTION</scope>
    <source>
        <strain>HR</strain>
    </source>
</reference>
<dbReference type="EC" id="2.7.13.3"/>
<dbReference type="EMBL" id="U22925">
    <property type="protein sequence ID" value="AAA93222.1"/>
    <property type="molecule type" value="Genomic_DNA"/>
</dbReference>
<dbReference type="PIR" id="B57145">
    <property type="entry name" value="B57145"/>
</dbReference>
<dbReference type="SMR" id="P0C0Z0"/>
<dbReference type="GO" id="GO:0005886">
    <property type="term" value="C:plasma membrane"/>
    <property type="evidence" value="ECO:0007669"/>
    <property type="project" value="UniProtKB-SubCell"/>
</dbReference>
<dbReference type="GO" id="GO:0005524">
    <property type="term" value="F:ATP binding"/>
    <property type="evidence" value="ECO:0007669"/>
    <property type="project" value="UniProtKB-KW"/>
</dbReference>
<dbReference type="GO" id="GO:0000155">
    <property type="term" value="F:phosphorelay sensor kinase activity"/>
    <property type="evidence" value="ECO:0007669"/>
    <property type="project" value="InterPro"/>
</dbReference>
<dbReference type="CDD" id="cd00082">
    <property type="entry name" value="HisKA"/>
    <property type="match status" value="1"/>
</dbReference>
<dbReference type="Gene3D" id="1.10.287.130">
    <property type="match status" value="1"/>
</dbReference>
<dbReference type="Gene3D" id="3.30.565.10">
    <property type="entry name" value="Histidine kinase-like ATPase, C-terminal domain"/>
    <property type="match status" value="1"/>
</dbReference>
<dbReference type="InterPro" id="IPR050980">
    <property type="entry name" value="2C_sensor_his_kinase"/>
</dbReference>
<dbReference type="InterPro" id="IPR036890">
    <property type="entry name" value="HATPase_C_sf"/>
</dbReference>
<dbReference type="InterPro" id="IPR005467">
    <property type="entry name" value="His_kinase_dom"/>
</dbReference>
<dbReference type="InterPro" id="IPR003661">
    <property type="entry name" value="HisK_dim/P_dom"/>
</dbReference>
<dbReference type="InterPro" id="IPR036097">
    <property type="entry name" value="HisK_dim/P_sf"/>
</dbReference>
<dbReference type="InterPro" id="IPR047770">
    <property type="entry name" value="RegB"/>
</dbReference>
<dbReference type="InterPro" id="IPR004358">
    <property type="entry name" value="Sig_transdc_His_kin-like_C"/>
</dbReference>
<dbReference type="NCBIfam" id="NF033792">
    <property type="entry name" value="ActS_PrrB_HisK"/>
    <property type="match status" value="1"/>
</dbReference>
<dbReference type="NCBIfam" id="NF045988">
    <property type="entry name" value="HisKinRegBRhodob"/>
    <property type="match status" value="1"/>
</dbReference>
<dbReference type="PANTHER" id="PTHR44936">
    <property type="entry name" value="SENSOR PROTEIN CREC"/>
    <property type="match status" value="1"/>
</dbReference>
<dbReference type="PANTHER" id="PTHR44936:SF10">
    <property type="entry name" value="SENSOR PROTEIN RSTB"/>
    <property type="match status" value="1"/>
</dbReference>
<dbReference type="Pfam" id="PF02518">
    <property type="entry name" value="HATPase_c"/>
    <property type="match status" value="1"/>
</dbReference>
<dbReference type="Pfam" id="PF00512">
    <property type="entry name" value="HisKA"/>
    <property type="match status" value="1"/>
</dbReference>
<dbReference type="PRINTS" id="PR00344">
    <property type="entry name" value="BCTRLSENSOR"/>
</dbReference>
<dbReference type="SMART" id="SM00387">
    <property type="entry name" value="HATPase_c"/>
    <property type="match status" value="1"/>
</dbReference>
<dbReference type="SMART" id="SM00388">
    <property type="entry name" value="HisKA"/>
    <property type="match status" value="1"/>
</dbReference>
<dbReference type="SUPFAM" id="SSF55874">
    <property type="entry name" value="ATPase domain of HSP90 chaperone/DNA topoisomerase II/histidine kinase"/>
    <property type="match status" value="1"/>
</dbReference>
<dbReference type="SUPFAM" id="SSF47384">
    <property type="entry name" value="Homodimeric domain of signal transducing histidine kinase"/>
    <property type="match status" value="1"/>
</dbReference>
<dbReference type="PROSITE" id="PS50109">
    <property type="entry name" value="HIS_KIN"/>
    <property type="match status" value="1"/>
</dbReference>
<feature type="chain" id="PRO_0000074859" description="Sensor histidine kinase RegB">
    <location>
        <begin position="1"/>
        <end position="462"/>
    </location>
</feature>
<feature type="topological domain" description="Cytoplasmic" evidence="1">
    <location>
        <begin position="1"/>
        <end position="25"/>
    </location>
</feature>
<feature type="transmembrane region" description="Helical" evidence="1">
    <location>
        <begin position="26"/>
        <end position="45"/>
    </location>
</feature>
<feature type="topological domain" description="Extracellular" evidence="1">
    <location>
        <begin position="46"/>
        <end position="51"/>
    </location>
</feature>
<feature type="transmembrane region" description="Helical" evidence="1">
    <location>
        <begin position="52"/>
        <end position="70"/>
    </location>
</feature>
<feature type="topological domain" description="Cytoplasmic" evidence="1">
    <location>
        <begin position="71"/>
        <end position="78"/>
    </location>
</feature>
<feature type="transmembrane region" description="Helical" evidence="1">
    <location>
        <begin position="79"/>
        <end position="96"/>
    </location>
</feature>
<feature type="topological domain" description="Extracellular" evidence="1">
    <location>
        <begin position="97"/>
        <end position="103"/>
    </location>
</feature>
<feature type="transmembrane region" description="Helical" evidence="1">
    <location>
        <begin position="104"/>
        <end position="123"/>
    </location>
</feature>
<feature type="topological domain" description="Cytoplasmic" evidence="1">
    <location>
        <begin position="124"/>
        <end position="129"/>
    </location>
</feature>
<feature type="transmembrane region" description="Helical" evidence="1">
    <location>
        <begin position="130"/>
        <end position="149"/>
    </location>
</feature>
<feature type="topological domain" description="Extracellular" evidence="1">
    <location>
        <begin position="150"/>
        <end position="164"/>
    </location>
</feature>
<feature type="transmembrane region" description="Helical" evidence="1">
    <location>
        <begin position="165"/>
        <end position="182"/>
    </location>
</feature>
<feature type="topological domain" description="Cytoplasmic" evidence="1">
    <location>
        <begin position="183"/>
        <end position="462"/>
    </location>
</feature>
<feature type="domain" description="Histidine kinase" evidence="2">
    <location>
        <begin position="218"/>
        <end position="445"/>
    </location>
</feature>
<feature type="modified residue" description="Phosphohistidine; by autocatalysis" evidence="2">
    <location>
        <position position="221"/>
    </location>
</feature>